<accession>B0SGW0</accession>
<feature type="chain" id="PRO_1000126324" description="Probable transaldolase">
    <location>
        <begin position="1"/>
        <end position="214"/>
    </location>
</feature>
<feature type="active site" description="Schiff-base intermediate with substrate" evidence="1">
    <location>
        <position position="83"/>
    </location>
</feature>
<gene>
    <name evidence="1" type="primary">tal</name>
    <name type="ordered locus">LBF_1413</name>
</gene>
<proteinExistence type="inferred from homology"/>
<dbReference type="EC" id="2.2.1.2" evidence="1"/>
<dbReference type="EMBL" id="CP000777">
    <property type="protein sequence ID" value="ABZ93927.1"/>
    <property type="molecule type" value="Genomic_DNA"/>
</dbReference>
<dbReference type="RefSeq" id="WP_012388452.1">
    <property type="nucleotide sequence ID" value="NC_010842.1"/>
</dbReference>
<dbReference type="SMR" id="B0SGW0"/>
<dbReference type="KEGG" id="lbf:LBF_1413"/>
<dbReference type="HOGENOM" id="CLU_079764_0_0_12"/>
<dbReference type="UniPathway" id="UPA00115">
    <property type="reaction ID" value="UER00414"/>
</dbReference>
<dbReference type="GO" id="GO:0005737">
    <property type="term" value="C:cytoplasm"/>
    <property type="evidence" value="ECO:0007669"/>
    <property type="project" value="UniProtKB-SubCell"/>
</dbReference>
<dbReference type="GO" id="GO:0016832">
    <property type="term" value="F:aldehyde-lyase activity"/>
    <property type="evidence" value="ECO:0007669"/>
    <property type="project" value="InterPro"/>
</dbReference>
<dbReference type="GO" id="GO:0004801">
    <property type="term" value="F:transaldolase activity"/>
    <property type="evidence" value="ECO:0007669"/>
    <property type="project" value="UniProtKB-UniRule"/>
</dbReference>
<dbReference type="GO" id="GO:0005975">
    <property type="term" value="P:carbohydrate metabolic process"/>
    <property type="evidence" value="ECO:0007669"/>
    <property type="project" value="InterPro"/>
</dbReference>
<dbReference type="GO" id="GO:0006098">
    <property type="term" value="P:pentose-phosphate shunt"/>
    <property type="evidence" value="ECO:0007669"/>
    <property type="project" value="UniProtKB-UniRule"/>
</dbReference>
<dbReference type="CDD" id="cd00956">
    <property type="entry name" value="Transaldolase_FSA"/>
    <property type="match status" value="1"/>
</dbReference>
<dbReference type="FunFam" id="3.20.20.70:FF:000018">
    <property type="entry name" value="Probable transaldolase"/>
    <property type="match status" value="1"/>
</dbReference>
<dbReference type="Gene3D" id="3.20.20.70">
    <property type="entry name" value="Aldolase class I"/>
    <property type="match status" value="1"/>
</dbReference>
<dbReference type="HAMAP" id="MF_00494">
    <property type="entry name" value="Transaldolase_3b"/>
    <property type="match status" value="1"/>
</dbReference>
<dbReference type="InterPro" id="IPR013785">
    <property type="entry name" value="Aldolase_TIM"/>
</dbReference>
<dbReference type="InterPro" id="IPR001585">
    <property type="entry name" value="TAL/FSA"/>
</dbReference>
<dbReference type="InterPro" id="IPR022999">
    <property type="entry name" value="Transaldolase_3B"/>
</dbReference>
<dbReference type="InterPro" id="IPR004731">
    <property type="entry name" value="Transaldolase_3B/F6P_aldolase"/>
</dbReference>
<dbReference type="InterPro" id="IPR018225">
    <property type="entry name" value="Transaldolase_AS"/>
</dbReference>
<dbReference type="InterPro" id="IPR033919">
    <property type="entry name" value="TSA/FSA_arc/bac"/>
</dbReference>
<dbReference type="NCBIfam" id="TIGR00875">
    <property type="entry name" value="fsa_talC_mipB"/>
    <property type="match status" value="1"/>
</dbReference>
<dbReference type="PANTHER" id="PTHR10683:SF40">
    <property type="entry name" value="FRUCTOSE-6-PHOSPHATE ALDOLASE 1-RELATED"/>
    <property type="match status" value="1"/>
</dbReference>
<dbReference type="PANTHER" id="PTHR10683">
    <property type="entry name" value="TRANSALDOLASE"/>
    <property type="match status" value="1"/>
</dbReference>
<dbReference type="Pfam" id="PF00923">
    <property type="entry name" value="TAL_FSA"/>
    <property type="match status" value="1"/>
</dbReference>
<dbReference type="SUPFAM" id="SSF51569">
    <property type="entry name" value="Aldolase"/>
    <property type="match status" value="1"/>
</dbReference>
<dbReference type="PROSITE" id="PS01054">
    <property type="entry name" value="TRANSALDOLASE_1"/>
    <property type="match status" value="1"/>
</dbReference>
<keyword id="KW-0963">Cytoplasm</keyword>
<keyword id="KW-0570">Pentose shunt</keyword>
<keyword id="KW-0704">Schiff base</keyword>
<keyword id="KW-0808">Transferase</keyword>
<name>TAL_LEPBA</name>
<organism>
    <name type="scientific">Leptospira biflexa serovar Patoc (strain Patoc 1 / Ames)</name>
    <dbReference type="NCBI Taxonomy" id="355278"/>
    <lineage>
        <taxon>Bacteria</taxon>
        <taxon>Pseudomonadati</taxon>
        <taxon>Spirochaetota</taxon>
        <taxon>Spirochaetia</taxon>
        <taxon>Leptospirales</taxon>
        <taxon>Leptospiraceae</taxon>
        <taxon>Leptospira</taxon>
    </lineage>
</organism>
<sequence>MNLFLDTANIDEIKKVHELGLLDGITTNPSIIAKSGRKFTEVIKEICSFVKGPVSAEVLATDAPTMIKEGLELSKIAENVVVKVPLIPEGMKAVKAFAEQGIQTNVTLCFTANQALLAAKAGATFISPFVGRLDDVGYDGLELISEIREIYDNYGIETQILAASVRHPIHFKEVALRGADCVTLPYSVFEMLFKHPLTDSGLAKFVEDSKKLNW</sequence>
<protein>
    <recommendedName>
        <fullName evidence="1">Probable transaldolase</fullName>
        <ecNumber evidence="1">2.2.1.2</ecNumber>
    </recommendedName>
</protein>
<comment type="function">
    <text evidence="1">Transaldolase is important for the balance of metabolites in the pentose-phosphate pathway.</text>
</comment>
<comment type="catalytic activity">
    <reaction evidence="1">
        <text>D-sedoheptulose 7-phosphate + D-glyceraldehyde 3-phosphate = D-erythrose 4-phosphate + beta-D-fructose 6-phosphate</text>
        <dbReference type="Rhea" id="RHEA:17053"/>
        <dbReference type="ChEBI" id="CHEBI:16897"/>
        <dbReference type="ChEBI" id="CHEBI:57483"/>
        <dbReference type="ChEBI" id="CHEBI:57634"/>
        <dbReference type="ChEBI" id="CHEBI:59776"/>
        <dbReference type="EC" id="2.2.1.2"/>
    </reaction>
</comment>
<comment type="pathway">
    <text evidence="1">Carbohydrate degradation; pentose phosphate pathway; D-glyceraldehyde 3-phosphate and beta-D-fructose 6-phosphate from D-ribose 5-phosphate and D-xylulose 5-phosphate (non-oxidative stage): step 2/3.</text>
</comment>
<comment type="subcellular location">
    <subcellularLocation>
        <location evidence="1">Cytoplasm</location>
    </subcellularLocation>
</comment>
<comment type="similarity">
    <text evidence="1">Belongs to the transaldolase family. Type 3B subfamily.</text>
</comment>
<reference key="1">
    <citation type="journal article" date="2008" name="PLoS ONE">
        <title>Genome sequence of the saprophyte Leptospira biflexa provides insights into the evolution of Leptospira and the pathogenesis of leptospirosis.</title>
        <authorList>
            <person name="Picardeau M."/>
            <person name="Bulach D.M."/>
            <person name="Bouchier C."/>
            <person name="Zuerner R.L."/>
            <person name="Zidane N."/>
            <person name="Wilson P.J."/>
            <person name="Creno S."/>
            <person name="Kuczek E.S."/>
            <person name="Bommezzadri S."/>
            <person name="Davis J.C."/>
            <person name="McGrath A."/>
            <person name="Johnson M.J."/>
            <person name="Boursaux-Eude C."/>
            <person name="Seemann T."/>
            <person name="Rouy Z."/>
            <person name="Coppel R.L."/>
            <person name="Rood J.I."/>
            <person name="Lajus A."/>
            <person name="Davies J.K."/>
            <person name="Medigue C."/>
            <person name="Adler B."/>
        </authorList>
    </citation>
    <scope>NUCLEOTIDE SEQUENCE [LARGE SCALE GENOMIC DNA]</scope>
    <source>
        <strain>Patoc 1 / Ames</strain>
    </source>
</reference>
<evidence type="ECO:0000255" key="1">
    <source>
        <dbReference type="HAMAP-Rule" id="MF_00494"/>
    </source>
</evidence>